<organism>
    <name type="scientific">Medicago truncatula</name>
    <name type="common">Barrel medic</name>
    <name type="synonym">Medicago tribuloides</name>
    <dbReference type="NCBI Taxonomy" id="3880"/>
    <lineage>
        <taxon>Eukaryota</taxon>
        <taxon>Viridiplantae</taxon>
        <taxon>Streptophyta</taxon>
        <taxon>Embryophyta</taxon>
        <taxon>Tracheophyta</taxon>
        <taxon>Spermatophyta</taxon>
        <taxon>Magnoliopsida</taxon>
        <taxon>eudicotyledons</taxon>
        <taxon>Gunneridae</taxon>
        <taxon>Pentapetalae</taxon>
        <taxon>rosids</taxon>
        <taxon>fabids</taxon>
        <taxon>Fabales</taxon>
        <taxon>Fabaceae</taxon>
        <taxon>Papilionoideae</taxon>
        <taxon>50 kb inversion clade</taxon>
        <taxon>NPAAA clade</taxon>
        <taxon>Hologalegina</taxon>
        <taxon>IRL clade</taxon>
        <taxon>Trifolieae</taxon>
        <taxon>Medicago</taxon>
    </lineage>
</organism>
<keyword id="KW-0040">ANK repeat</keyword>
<keyword id="KW-1003">Cell membrane</keyword>
<keyword id="KW-0963">Cytoplasm</keyword>
<keyword id="KW-0472">Membrane</keyword>
<keyword id="KW-0479">Metal-binding</keyword>
<keyword id="KW-0536">Nodulation</keyword>
<keyword id="KW-0539">Nucleus</keyword>
<keyword id="KW-1185">Reference proteome</keyword>
<keyword id="KW-0677">Repeat</keyword>
<keyword id="KW-0833">Ubl conjugation pathway</keyword>
<keyword id="KW-0862">Zinc</keyword>
<keyword id="KW-0863">Zinc-finger</keyword>
<dbReference type="EMBL" id="CM001217">
    <property type="protein sequence ID" value="KEH41446.1"/>
    <property type="molecule type" value="Genomic_DNA"/>
</dbReference>
<dbReference type="EMBL" id="PSQE01000001">
    <property type="protein sequence ID" value="RHN78974.1"/>
    <property type="molecule type" value="Genomic_DNA"/>
</dbReference>
<dbReference type="RefSeq" id="XP_013467409.1">
    <property type="nucleotide sequence ID" value="XM_013611955.1"/>
</dbReference>
<dbReference type="SMR" id="A0A072VIM5"/>
<dbReference type="STRING" id="3880.A0A072VIM5"/>
<dbReference type="EnsemblPlants" id="rna2648">
    <property type="protein sequence ID" value="RHN78974.1"/>
    <property type="gene ID" value="gene2648"/>
</dbReference>
<dbReference type="GeneID" id="25483282"/>
<dbReference type="Gramene" id="rna2648">
    <property type="protein sequence ID" value="RHN78974.1"/>
    <property type="gene ID" value="gene2648"/>
</dbReference>
<dbReference type="KEGG" id="mtr:25483282"/>
<dbReference type="HOGENOM" id="CLU_028148_0_0_1"/>
<dbReference type="OrthoDB" id="45365at2759"/>
<dbReference type="UniPathway" id="UPA00143"/>
<dbReference type="Proteomes" id="UP000002051">
    <property type="component" value="Chromosome 1"/>
</dbReference>
<dbReference type="Proteomes" id="UP000265566">
    <property type="component" value="Chromosome 1"/>
</dbReference>
<dbReference type="GO" id="GO:0005737">
    <property type="term" value="C:cytoplasm"/>
    <property type="evidence" value="ECO:0007669"/>
    <property type="project" value="UniProtKB-SubCell"/>
</dbReference>
<dbReference type="GO" id="GO:0005634">
    <property type="term" value="C:nucleus"/>
    <property type="evidence" value="ECO:0000318"/>
    <property type="project" value="GO_Central"/>
</dbReference>
<dbReference type="GO" id="GO:0005886">
    <property type="term" value="C:plasma membrane"/>
    <property type="evidence" value="ECO:0007669"/>
    <property type="project" value="UniProtKB-SubCell"/>
</dbReference>
<dbReference type="GO" id="GO:0000976">
    <property type="term" value="F:transcription cis-regulatory region binding"/>
    <property type="evidence" value="ECO:0000318"/>
    <property type="project" value="GO_Central"/>
</dbReference>
<dbReference type="GO" id="GO:0008270">
    <property type="term" value="F:zinc ion binding"/>
    <property type="evidence" value="ECO:0007669"/>
    <property type="project" value="UniProtKB-KW"/>
</dbReference>
<dbReference type="GO" id="GO:0009864">
    <property type="term" value="P:induced systemic resistance, jasmonic acid mediated signaling pathway"/>
    <property type="evidence" value="ECO:0000318"/>
    <property type="project" value="GO_Central"/>
</dbReference>
<dbReference type="GO" id="GO:0009877">
    <property type="term" value="P:nodulation"/>
    <property type="evidence" value="ECO:0000315"/>
    <property type="project" value="UniProtKB"/>
</dbReference>
<dbReference type="GO" id="GO:0099402">
    <property type="term" value="P:plant organ development"/>
    <property type="evidence" value="ECO:0007669"/>
    <property type="project" value="InterPro"/>
</dbReference>
<dbReference type="GO" id="GO:0006355">
    <property type="term" value="P:regulation of DNA-templated transcription"/>
    <property type="evidence" value="ECO:0000318"/>
    <property type="project" value="GO_Central"/>
</dbReference>
<dbReference type="CDD" id="cd18310">
    <property type="entry name" value="BTB_POZ_NPR_plant"/>
    <property type="match status" value="1"/>
</dbReference>
<dbReference type="FunFam" id="3.30.710.10:FF:000084">
    <property type="entry name" value="regulatory protein NPR5 isoform X1"/>
    <property type="match status" value="1"/>
</dbReference>
<dbReference type="FunFam" id="1.25.40.20:FF:000058">
    <property type="entry name" value="regulatory protein NPR5 isoform X2"/>
    <property type="match status" value="1"/>
</dbReference>
<dbReference type="Gene3D" id="1.25.40.20">
    <property type="entry name" value="Ankyrin repeat-containing domain"/>
    <property type="match status" value="1"/>
</dbReference>
<dbReference type="Gene3D" id="3.30.710.10">
    <property type="entry name" value="Potassium Channel Kv1.1, Chain A"/>
    <property type="match status" value="1"/>
</dbReference>
<dbReference type="InterPro" id="IPR002110">
    <property type="entry name" value="Ankyrin_rpt"/>
</dbReference>
<dbReference type="InterPro" id="IPR036770">
    <property type="entry name" value="Ankyrin_rpt-contain_sf"/>
</dbReference>
<dbReference type="InterPro" id="IPR000210">
    <property type="entry name" value="BTB/POZ_dom"/>
</dbReference>
<dbReference type="InterPro" id="IPR044284">
    <property type="entry name" value="NPR5/6"/>
</dbReference>
<dbReference type="InterPro" id="IPR024228">
    <property type="entry name" value="NPR_central_dom"/>
</dbReference>
<dbReference type="InterPro" id="IPR011333">
    <property type="entry name" value="SKP1/BTB/POZ_sf"/>
</dbReference>
<dbReference type="PANTHER" id="PTHR46668">
    <property type="entry name" value="BTB/POZ DOMAIN AND ANKYRIN REPEAT-CONTAINING PROTEIN NH5.2"/>
    <property type="match status" value="1"/>
</dbReference>
<dbReference type="PANTHER" id="PTHR46668:SF11">
    <property type="entry name" value="BTB_POZ DOMAIN AND ANKYRIN REPEAT-CONTAINING PROTEIN NOOT2"/>
    <property type="match status" value="1"/>
</dbReference>
<dbReference type="Pfam" id="PF12796">
    <property type="entry name" value="Ank_2"/>
    <property type="match status" value="1"/>
</dbReference>
<dbReference type="Pfam" id="PF00651">
    <property type="entry name" value="BTB"/>
    <property type="match status" value="1"/>
</dbReference>
<dbReference type="Pfam" id="PF11900">
    <property type="entry name" value="DUF3420"/>
    <property type="match status" value="1"/>
</dbReference>
<dbReference type="SMART" id="SM00248">
    <property type="entry name" value="ANK"/>
    <property type="match status" value="2"/>
</dbReference>
<dbReference type="SMART" id="SM00225">
    <property type="entry name" value="BTB"/>
    <property type="match status" value="1"/>
</dbReference>
<dbReference type="SUPFAM" id="SSF48403">
    <property type="entry name" value="Ankyrin repeat"/>
    <property type="match status" value="1"/>
</dbReference>
<dbReference type="SUPFAM" id="SSF54695">
    <property type="entry name" value="POZ domain"/>
    <property type="match status" value="1"/>
</dbReference>
<dbReference type="PROSITE" id="PS50297">
    <property type="entry name" value="ANK_REP_REGION"/>
    <property type="match status" value="1"/>
</dbReference>
<dbReference type="PROSITE" id="PS50088">
    <property type="entry name" value="ANK_REPEAT"/>
    <property type="match status" value="1"/>
</dbReference>
<dbReference type="PROSITE" id="PS50097">
    <property type="entry name" value="BTB"/>
    <property type="match status" value="1"/>
</dbReference>
<dbReference type="PROSITE" id="PS52046">
    <property type="entry name" value="ZF_C2HC_NPR"/>
    <property type="match status" value="1"/>
</dbReference>
<gene>
    <name evidence="10" type="primary">NOOT2</name>
    <name evidence="12" type="ordered locus">MTR_1g051025</name>
</gene>
<accession>A0A072VIM5</accession>
<evidence type="ECO:0000250" key="1">
    <source>
        <dbReference type="UniProtKB" id="G3LSH3"/>
    </source>
</evidence>
<evidence type="ECO:0000250" key="2">
    <source>
        <dbReference type="UniProtKB" id="O22286"/>
    </source>
</evidence>
<evidence type="ECO:0000250" key="3">
    <source>
        <dbReference type="UniProtKB" id="Q2HW56"/>
    </source>
</evidence>
<evidence type="ECO:0000250" key="4">
    <source>
        <dbReference type="UniProtKB" id="Q9ZVC2"/>
    </source>
</evidence>
<evidence type="ECO:0000255" key="5"/>
<evidence type="ECO:0000255" key="6">
    <source>
        <dbReference type="PROSITE-ProRule" id="PRU00037"/>
    </source>
</evidence>
<evidence type="ECO:0000255" key="7">
    <source>
        <dbReference type="PROSITE-ProRule" id="PRU01391"/>
    </source>
</evidence>
<evidence type="ECO:0000256" key="8">
    <source>
        <dbReference type="SAM" id="MobiDB-lite"/>
    </source>
</evidence>
<evidence type="ECO:0000269" key="9">
    <source>
    </source>
</evidence>
<evidence type="ECO:0000303" key="10">
    <source>
    </source>
</evidence>
<evidence type="ECO:0000305" key="11"/>
<evidence type="ECO:0000312" key="12">
    <source>
        <dbReference type="EMBL" id="KEH41446.1"/>
    </source>
</evidence>
<reference key="1">
    <citation type="journal article" date="2011" name="Nature">
        <title>The Medicago genome provides insight into the evolution of rhizobial symbioses.</title>
        <authorList>
            <person name="Young N.D."/>
            <person name="Debelle F."/>
            <person name="Oldroyd G.E.D."/>
            <person name="Geurts R."/>
            <person name="Cannon S.B."/>
            <person name="Udvardi M.K."/>
            <person name="Benedito V.A."/>
            <person name="Mayer K.F.X."/>
            <person name="Gouzy J."/>
            <person name="Schoof H."/>
            <person name="Van de Peer Y."/>
            <person name="Proost S."/>
            <person name="Cook D.R."/>
            <person name="Meyers B.C."/>
            <person name="Spannagl M."/>
            <person name="Cheung F."/>
            <person name="De Mita S."/>
            <person name="Krishnakumar V."/>
            <person name="Gundlach H."/>
            <person name="Zhou S."/>
            <person name="Mudge J."/>
            <person name="Bharti A.K."/>
            <person name="Murray J.D."/>
            <person name="Naoumkina M.A."/>
            <person name="Rosen B."/>
            <person name="Silverstein K.A.T."/>
            <person name="Tang H."/>
            <person name="Rombauts S."/>
            <person name="Zhao P.X."/>
            <person name="Zhou P."/>
            <person name="Barbe V."/>
            <person name="Bardou P."/>
            <person name="Bechner M."/>
            <person name="Bellec A."/>
            <person name="Berger A."/>
            <person name="Berges H."/>
            <person name="Bidwell S."/>
            <person name="Bisseling T."/>
            <person name="Choisne N."/>
            <person name="Couloux A."/>
            <person name="Denny R."/>
            <person name="Deshpande S."/>
            <person name="Dai X."/>
            <person name="Doyle J.J."/>
            <person name="Dudez A.-M."/>
            <person name="Farmer A.D."/>
            <person name="Fouteau S."/>
            <person name="Franken C."/>
            <person name="Gibelin C."/>
            <person name="Gish J."/>
            <person name="Goldstein S."/>
            <person name="Gonzalez A.J."/>
            <person name="Green P.J."/>
            <person name="Hallab A."/>
            <person name="Hartog M."/>
            <person name="Hua A."/>
            <person name="Humphray S.J."/>
            <person name="Jeong D.-H."/>
            <person name="Jing Y."/>
            <person name="Jocker A."/>
            <person name="Kenton S.M."/>
            <person name="Kim D.-J."/>
            <person name="Klee K."/>
            <person name="Lai H."/>
            <person name="Lang C."/>
            <person name="Lin S."/>
            <person name="Macmil S.L."/>
            <person name="Magdelenat G."/>
            <person name="Matthews L."/>
            <person name="McCorrison J."/>
            <person name="Monaghan E.L."/>
            <person name="Mun J.-H."/>
            <person name="Najar F.Z."/>
            <person name="Nicholson C."/>
            <person name="Noirot C."/>
            <person name="O'Bleness M."/>
            <person name="Paule C.R."/>
            <person name="Poulain J."/>
            <person name="Prion F."/>
            <person name="Qin B."/>
            <person name="Qu C."/>
            <person name="Retzel E.F."/>
            <person name="Riddle C."/>
            <person name="Sallet E."/>
            <person name="Samain S."/>
            <person name="Samson N."/>
            <person name="Sanders I."/>
            <person name="Saurat O."/>
            <person name="Scarpelli C."/>
            <person name="Schiex T."/>
            <person name="Segurens B."/>
            <person name="Severin A.J."/>
            <person name="Sherrier D.J."/>
            <person name="Shi R."/>
            <person name="Sims S."/>
            <person name="Singer S.R."/>
            <person name="Sinharoy S."/>
            <person name="Sterck L."/>
            <person name="Viollet A."/>
            <person name="Wang B.-B."/>
            <person name="Wang K."/>
            <person name="Wang M."/>
            <person name="Wang X."/>
            <person name="Warfsmann J."/>
            <person name="Weissenbach J."/>
            <person name="White D.D."/>
            <person name="White J.D."/>
            <person name="Wiley G.B."/>
            <person name="Wincker P."/>
            <person name="Xing Y."/>
            <person name="Yang L."/>
            <person name="Yao Z."/>
            <person name="Ying F."/>
            <person name="Zhai J."/>
            <person name="Zhou L."/>
            <person name="Zuber A."/>
            <person name="Denarie J."/>
            <person name="Dixon R.A."/>
            <person name="May G.D."/>
            <person name="Schwartz D.C."/>
            <person name="Rogers J."/>
            <person name="Quetier F."/>
            <person name="Town C.D."/>
            <person name="Roe B.A."/>
        </authorList>
    </citation>
    <scope>NUCLEOTIDE SEQUENCE [LARGE SCALE GENOMIC DNA]</scope>
    <source>
        <strain>cv. Jemalong A17</strain>
    </source>
</reference>
<reference key="2">
    <citation type="journal article" date="2014" name="BMC Genomics">
        <title>An improved genome release (version Mt4.0) for the model legume Medicago truncatula.</title>
        <authorList>
            <person name="Tang H."/>
            <person name="Krishnakumar V."/>
            <person name="Bidwell S."/>
            <person name="Rosen B."/>
            <person name="Chan A."/>
            <person name="Zhou S."/>
            <person name="Gentzbittel L."/>
            <person name="Childs K.L."/>
            <person name="Yandell M."/>
            <person name="Gundlach H."/>
            <person name="Mayer K.F."/>
            <person name="Schwartz D.C."/>
            <person name="Town C.D."/>
        </authorList>
    </citation>
    <scope>GENOME REANNOTATION</scope>
    <source>
        <strain>cv. Jemalong A17</strain>
    </source>
</reference>
<reference key="3">
    <citation type="journal article" date="2018" name="Nat. Plants">
        <title>Whole-genome landscape of Medicago truncatula symbiotic genes.</title>
        <authorList>
            <person name="Pecrix Y."/>
            <person name="Staton S.E."/>
            <person name="Sallet E."/>
            <person name="Lelandais-Briere C."/>
            <person name="Moreau S."/>
            <person name="Carrere S."/>
            <person name="Blein T."/>
            <person name="Jardinaud M.F."/>
            <person name="Latrasse D."/>
            <person name="Zouine M."/>
            <person name="Zahm M."/>
            <person name="Kreplak J."/>
            <person name="Mayjonade B."/>
            <person name="Satge C."/>
            <person name="Perez M."/>
            <person name="Cauet S."/>
            <person name="Marande W."/>
            <person name="Chantry-Darmon C."/>
            <person name="Lopez-Roques C."/>
            <person name="Bouchez O."/>
            <person name="Berard A."/>
            <person name="Debelle F."/>
            <person name="Munos S."/>
            <person name="Bendahmane A."/>
            <person name="Berges H."/>
            <person name="Niebel A."/>
            <person name="Buitink J."/>
            <person name="Frugier F."/>
            <person name="Benhamed M."/>
            <person name="Crespi M."/>
            <person name="Gouzy J."/>
            <person name="Gamas P."/>
        </authorList>
    </citation>
    <scope>NUCLEOTIDE SEQUENCE [LARGE SCALE GENOMIC DNA]</scope>
    <source>
        <strain>cv. Jemalong A17</strain>
    </source>
</reference>
<reference key="4">
    <citation type="journal article" date="2018" name="Plant Physiol.">
        <title>MtNODULE ROOT1 and MtNODULE ROOT2 are essential for indeterminate nodule identity.</title>
        <authorList>
            <person name="Magne K."/>
            <person name="Couzigou J.M."/>
            <person name="Schiessl K."/>
            <person name="Liu S."/>
            <person name="George J."/>
            <person name="Zhukov V."/>
            <person name="Sahl L."/>
            <person name="Boyer F."/>
            <person name="Iantcheva A."/>
            <person name="Mysore K.S."/>
            <person name="Wen J."/>
            <person name="Citerne S."/>
            <person name="Oldroyd G.E.D."/>
            <person name="Ratet P."/>
        </authorList>
    </citation>
    <scope>FUNCTION</scope>
    <scope>INDUCTION</scope>
    <scope>DISRUPTION PHENOTYPE</scope>
</reference>
<comment type="function">
    <text evidence="1 2 3 9">May act as a substrate-specific adapter of an E3 ubiquitin-protein ligase complex (CUL3-RBX1-BTB) which mediates the ubiquitination and subsequent proteasomal degradation of target proteins (By similarity). Transcriptional co-regulator involved in the promotion of leaf and floral meristem fate and determinacy (By similarity). Required for the abscission of senescent organs, probably by regulating the cell wall disorganization in abscission zones (AZs, e.g. pulvini at the base of leaves) (By similarity). Involved in the coordination of the symbiotic nodule developmental program; promotes the formation of root nodules by interacting directly with APP1 to modulate the expression of the nuclear transcription factor Y subunit (NF-YA1), a key nodulin (By similarity). Involved in the regulation of indeterminate nodule identity in association with NOOT1 (PubMed:30026291).</text>
</comment>
<comment type="pathway">
    <text evidence="2">Protein modification; protein ubiquitination.</text>
</comment>
<comment type="subunit">
    <text evidence="4">Homodimer.</text>
</comment>
<comment type="subcellular location">
    <subcellularLocation>
        <location evidence="1">Nucleus</location>
    </subcellularLocation>
    <subcellularLocation>
        <location evidence="1">Cytoplasm</location>
    </subcellularLocation>
    <subcellularLocation>
        <location evidence="1">Cell membrane</location>
        <topology evidence="1">Peripheral membrane protein</topology>
        <orientation evidence="1">Cytoplasmic side</orientation>
    </subcellularLocation>
</comment>
<comment type="induction">
    <text evidence="9">Induced in roots during early nodule formation.</text>
</comment>
<comment type="domain">
    <text evidence="2">The BTB/POZ domain mediates the interaction with some component of ubiquitin ligase complexes.</text>
</comment>
<comment type="disruption phenotype">
    <text evidence="9">No visible phenotype under normal growth conditions (PubMed:30026291). The double mutants noot1 and noot2 exhibit complete loss of nodule identity and develop only non-fixing root-like structures that are no longer able to host symbiotic rhizobia (PubMed:30026291).</text>
</comment>
<comment type="similarity">
    <text evidence="11">Belongs to the plant 'ANKYRIN-BTB/POZ' family. 'NOOT-BOP-COCH-like' (NBCL) subfamily.</text>
</comment>
<name>NOOT2_MEDTR</name>
<sequence>MSLEETLRSLSLDYLNLLINGQAFSDVTFQVEGRLVHAHRCILAARSLFFRKFFCGPDPPSGLDPIGGGSSRQPTVRPGVIPVNSVGYEVFLLLLQFLYSGQVSIVPQKHEPRPNCGERGCWHTHCTSAVDLALDTLAAARYFGVEQLALLTQKQLVSMVEKASIDDVMKVLIASRKQEMPQLWTTCSHLVAKSGLPPEILAKHLSIDVVAKIEELRLKSSLARRSLMPLHHHHHHHHHHDFGDLEDQKIRRMRRALDSSDVELVKLMVMGEGLNLDEALALHYAVENCSREVVKALLELGAADVNYPAGPAGKTSLHVAAEMVSPEMVAVLLDHHADPTVRTVDGVTPLDILRTLTSDFLFKGAVPGLNHIEPNKLRLCLELVQSAALVLSREENNASNNNNNNNNASSSAAPVYPPMSEDHSSSSSGNNNNNNNSIGNLNLDSRLVYLNLGATQMGGDDDNRHNNSHREAMNRQGGHGCDPSMYHHSHDF</sequence>
<proteinExistence type="evidence at transcript level"/>
<protein>
    <recommendedName>
        <fullName evidence="11">BTB/POZ domain and ankyrin repeat-containing protein NOOT2</fullName>
    </recommendedName>
    <alternativeName>
        <fullName evidence="10">Protein NODULE ROOT 2</fullName>
        <shortName evidence="10">MtNOOT2</shortName>
    </alternativeName>
</protein>
<feature type="chain" id="PRO_0000445728" description="BTB/POZ domain and ankyrin repeat-containing protein NOOT2">
    <location>
        <begin position="1"/>
        <end position="492"/>
    </location>
</feature>
<feature type="domain" description="BTB" evidence="6">
    <location>
        <begin position="25"/>
        <end position="107"/>
    </location>
</feature>
<feature type="repeat" description="ANK 1" evidence="5">
    <location>
        <begin position="248"/>
        <end position="277"/>
    </location>
</feature>
<feature type="repeat" description="ANK 2" evidence="5">
    <location>
        <begin position="278"/>
        <end position="307"/>
    </location>
</feature>
<feature type="repeat" description="ANK 3" evidence="5">
    <location>
        <begin position="312"/>
        <end position="341"/>
    </location>
</feature>
<feature type="repeat" description="ANK 4" evidence="11">
    <location>
        <begin position="345"/>
        <end position="379"/>
    </location>
</feature>
<feature type="zinc finger region" description="C2HC NPR-type" evidence="7">
    <location>
        <begin position="113"/>
        <end position="127"/>
    </location>
</feature>
<feature type="region of interest" description="Disordered" evidence="8">
    <location>
        <begin position="395"/>
        <end position="439"/>
    </location>
</feature>
<feature type="region of interest" description="Disordered" evidence="8">
    <location>
        <begin position="455"/>
        <end position="492"/>
    </location>
</feature>
<feature type="compositionally biased region" description="Low complexity" evidence="8">
    <location>
        <begin position="397"/>
        <end position="413"/>
    </location>
</feature>
<feature type="compositionally biased region" description="Low complexity" evidence="8">
    <location>
        <begin position="425"/>
        <end position="439"/>
    </location>
</feature>
<feature type="compositionally biased region" description="Basic and acidic residues" evidence="8">
    <location>
        <begin position="461"/>
        <end position="473"/>
    </location>
</feature>
<feature type="binding site" evidence="7">
    <location>
        <position position="116"/>
    </location>
    <ligand>
        <name>Zn(2+)</name>
        <dbReference type="ChEBI" id="CHEBI:29105"/>
    </ligand>
</feature>
<feature type="binding site" evidence="7">
    <location>
        <position position="121"/>
    </location>
    <ligand>
        <name>Zn(2+)</name>
        <dbReference type="ChEBI" id="CHEBI:29105"/>
    </ligand>
</feature>
<feature type="binding site" evidence="7">
    <location>
        <position position="123"/>
    </location>
    <ligand>
        <name>Zn(2+)</name>
        <dbReference type="ChEBI" id="CHEBI:29105"/>
    </ligand>
</feature>
<feature type="binding site" evidence="7">
    <location>
        <position position="126"/>
    </location>
    <ligand>
        <name>Zn(2+)</name>
        <dbReference type="ChEBI" id="CHEBI:29105"/>
    </ligand>
</feature>